<protein>
    <recommendedName>
        <fullName evidence="1">Probable transcriptional regulatory protein Acid_5948</fullName>
    </recommendedName>
</protein>
<sequence>MSGHSKWATIKHKKAATDAKRGRAFTRLIKEITIAARNGGDPDGNPRLRSAILAAKNVSMPSDNIKKAIMRGTGELEGGQIEEVMFEGYGPGGAAVLVNVATDNRNRTVSEIRHAFSKNGGNMGEQGSVAWMFERRSQIFVPIEKATEDQLMGIVLDAGGDDLRNDGDQWEVLSDPASHDSVLKALESNGIPVVDPTIAWVPKNLMKLEGKNASGMLRLTEVLEDHDDVQSVYSNFDIDEKELEALSQ</sequence>
<accession>Q01TY1</accession>
<organism>
    <name type="scientific">Solibacter usitatus (strain Ellin6076)</name>
    <dbReference type="NCBI Taxonomy" id="234267"/>
    <lineage>
        <taxon>Bacteria</taxon>
        <taxon>Pseudomonadati</taxon>
        <taxon>Acidobacteriota</taxon>
        <taxon>Terriglobia</taxon>
        <taxon>Bryobacterales</taxon>
        <taxon>Solibacteraceae</taxon>
        <taxon>Candidatus Solibacter</taxon>
    </lineage>
</organism>
<name>Y5948_SOLUE</name>
<keyword id="KW-0963">Cytoplasm</keyword>
<keyword id="KW-0238">DNA-binding</keyword>
<keyword id="KW-0804">Transcription</keyword>
<keyword id="KW-0805">Transcription regulation</keyword>
<reference key="1">
    <citation type="journal article" date="2009" name="Appl. Environ. Microbiol.">
        <title>Three genomes from the phylum Acidobacteria provide insight into the lifestyles of these microorganisms in soils.</title>
        <authorList>
            <person name="Ward N.L."/>
            <person name="Challacombe J.F."/>
            <person name="Janssen P.H."/>
            <person name="Henrissat B."/>
            <person name="Coutinho P.M."/>
            <person name="Wu M."/>
            <person name="Xie G."/>
            <person name="Haft D.H."/>
            <person name="Sait M."/>
            <person name="Badger J."/>
            <person name="Barabote R.D."/>
            <person name="Bradley B."/>
            <person name="Brettin T.S."/>
            <person name="Brinkac L.M."/>
            <person name="Bruce D."/>
            <person name="Creasy T."/>
            <person name="Daugherty S.C."/>
            <person name="Davidsen T.M."/>
            <person name="DeBoy R.T."/>
            <person name="Detter J.C."/>
            <person name="Dodson R.J."/>
            <person name="Durkin A.S."/>
            <person name="Ganapathy A."/>
            <person name="Gwinn-Giglio M."/>
            <person name="Han C.S."/>
            <person name="Khouri H."/>
            <person name="Kiss H."/>
            <person name="Kothari S.P."/>
            <person name="Madupu R."/>
            <person name="Nelson K.E."/>
            <person name="Nelson W.C."/>
            <person name="Paulsen I."/>
            <person name="Penn K."/>
            <person name="Ren Q."/>
            <person name="Rosovitz M.J."/>
            <person name="Selengut J.D."/>
            <person name="Shrivastava S."/>
            <person name="Sullivan S.A."/>
            <person name="Tapia R."/>
            <person name="Thompson L.S."/>
            <person name="Watkins K.L."/>
            <person name="Yang Q."/>
            <person name="Yu C."/>
            <person name="Zafar N."/>
            <person name="Zhou L."/>
            <person name="Kuske C.R."/>
        </authorList>
    </citation>
    <scope>NUCLEOTIDE SEQUENCE [LARGE SCALE GENOMIC DNA]</scope>
    <source>
        <strain>Ellin6076</strain>
    </source>
</reference>
<proteinExistence type="inferred from homology"/>
<feature type="chain" id="PRO_1000045373" description="Probable transcriptional regulatory protein Acid_5948">
    <location>
        <begin position="1"/>
        <end position="248"/>
    </location>
</feature>
<comment type="subcellular location">
    <subcellularLocation>
        <location evidence="1">Cytoplasm</location>
    </subcellularLocation>
</comment>
<comment type="similarity">
    <text evidence="1">Belongs to the TACO1 family.</text>
</comment>
<dbReference type="EMBL" id="CP000473">
    <property type="protein sequence ID" value="ABJ86889.1"/>
    <property type="molecule type" value="Genomic_DNA"/>
</dbReference>
<dbReference type="SMR" id="Q01TY1"/>
<dbReference type="FunCoup" id="Q01TY1">
    <property type="interactions" value="621"/>
</dbReference>
<dbReference type="STRING" id="234267.Acid_5948"/>
<dbReference type="KEGG" id="sus:Acid_5948"/>
<dbReference type="eggNOG" id="COG0217">
    <property type="taxonomic scope" value="Bacteria"/>
</dbReference>
<dbReference type="HOGENOM" id="CLU_062974_2_2_0"/>
<dbReference type="InParanoid" id="Q01TY1"/>
<dbReference type="OrthoDB" id="9781053at2"/>
<dbReference type="GO" id="GO:0005829">
    <property type="term" value="C:cytosol"/>
    <property type="evidence" value="ECO:0007669"/>
    <property type="project" value="TreeGrafter"/>
</dbReference>
<dbReference type="GO" id="GO:0003677">
    <property type="term" value="F:DNA binding"/>
    <property type="evidence" value="ECO:0007669"/>
    <property type="project" value="UniProtKB-UniRule"/>
</dbReference>
<dbReference type="GO" id="GO:0006355">
    <property type="term" value="P:regulation of DNA-templated transcription"/>
    <property type="evidence" value="ECO:0007669"/>
    <property type="project" value="UniProtKB-UniRule"/>
</dbReference>
<dbReference type="FunFam" id="1.10.10.200:FF:000002">
    <property type="entry name" value="Probable transcriptional regulatory protein CLM62_37755"/>
    <property type="match status" value="1"/>
</dbReference>
<dbReference type="Gene3D" id="1.10.10.200">
    <property type="match status" value="1"/>
</dbReference>
<dbReference type="Gene3D" id="3.30.70.980">
    <property type="match status" value="2"/>
</dbReference>
<dbReference type="HAMAP" id="MF_00693">
    <property type="entry name" value="Transcrip_reg_TACO1"/>
    <property type="match status" value="1"/>
</dbReference>
<dbReference type="InterPro" id="IPR017856">
    <property type="entry name" value="Integrase-like_N"/>
</dbReference>
<dbReference type="InterPro" id="IPR048300">
    <property type="entry name" value="TACO1_YebC-like_2nd/3rd_dom"/>
</dbReference>
<dbReference type="InterPro" id="IPR049083">
    <property type="entry name" value="TACO1_YebC_N"/>
</dbReference>
<dbReference type="InterPro" id="IPR002876">
    <property type="entry name" value="Transcrip_reg_TACO1-like"/>
</dbReference>
<dbReference type="InterPro" id="IPR026564">
    <property type="entry name" value="Transcrip_reg_TACO1-like_dom3"/>
</dbReference>
<dbReference type="InterPro" id="IPR029072">
    <property type="entry name" value="YebC-like"/>
</dbReference>
<dbReference type="NCBIfam" id="NF001030">
    <property type="entry name" value="PRK00110.1"/>
    <property type="match status" value="1"/>
</dbReference>
<dbReference type="NCBIfam" id="NF009044">
    <property type="entry name" value="PRK12378.1"/>
    <property type="match status" value="1"/>
</dbReference>
<dbReference type="NCBIfam" id="TIGR01033">
    <property type="entry name" value="YebC/PmpR family DNA-binding transcriptional regulator"/>
    <property type="match status" value="1"/>
</dbReference>
<dbReference type="PANTHER" id="PTHR12532:SF6">
    <property type="entry name" value="TRANSCRIPTIONAL REGULATORY PROTEIN YEBC-RELATED"/>
    <property type="match status" value="1"/>
</dbReference>
<dbReference type="PANTHER" id="PTHR12532">
    <property type="entry name" value="TRANSLATIONAL ACTIVATOR OF CYTOCHROME C OXIDASE 1"/>
    <property type="match status" value="1"/>
</dbReference>
<dbReference type="Pfam" id="PF20772">
    <property type="entry name" value="TACO1_YebC_N"/>
    <property type="match status" value="1"/>
</dbReference>
<dbReference type="Pfam" id="PF01709">
    <property type="entry name" value="Transcrip_reg"/>
    <property type="match status" value="1"/>
</dbReference>
<dbReference type="SUPFAM" id="SSF75625">
    <property type="entry name" value="YebC-like"/>
    <property type="match status" value="1"/>
</dbReference>
<evidence type="ECO:0000255" key="1">
    <source>
        <dbReference type="HAMAP-Rule" id="MF_00693"/>
    </source>
</evidence>
<gene>
    <name type="ordered locus">Acid_5948</name>
</gene>